<reference key="1">
    <citation type="journal article" date="1997" name="J. Biol. Chem.">
        <title>Molecular identification of a novel protein that regulates biogenesis of photosystem I, a membrane protein complex.</title>
        <authorList>
            <person name="Bartsevich V.V."/>
            <person name="Pakrasi H.B."/>
        </authorList>
    </citation>
    <scope>NUCLEOTIDE SEQUENCE [GENOMIC DNA]</scope>
</reference>
<reference key="2">
    <citation type="journal article" date="1996" name="DNA Res.">
        <title>Sequence analysis of the genome of the unicellular cyanobacterium Synechocystis sp. strain PCC6803. II. Sequence determination of the entire genome and assignment of potential protein-coding regions.</title>
        <authorList>
            <person name="Kaneko T."/>
            <person name="Sato S."/>
            <person name="Kotani H."/>
            <person name="Tanaka A."/>
            <person name="Asamizu E."/>
            <person name="Nakamura Y."/>
            <person name="Miyajima N."/>
            <person name="Hirosawa M."/>
            <person name="Sugiura M."/>
            <person name="Sasamoto S."/>
            <person name="Kimura T."/>
            <person name="Hosouchi T."/>
            <person name="Matsuno A."/>
            <person name="Muraki A."/>
            <person name="Nakazaki N."/>
            <person name="Naruo K."/>
            <person name="Okumura S."/>
            <person name="Shimpo S."/>
            <person name="Takeuchi C."/>
            <person name="Wada T."/>
            <person name="Watanabe A."/>
            <person name="Yamada M."/>
            <person name="Yasuda M."/>
            <person name="Tabata S."/>
        </authorList>
    </citation>
    <scope>NUCLEOTIDE SEQUENCE [LARGE SCALE GENOMIC DNA]</scope>
    <source>
        <strain>ATCC 27184 / PCC 6803 / Kazusa</strain>
    </source>
</reference>
<comment type="function">
    <text>Regulates a post-transcriptional process during the life cycle of the PSI protein complex such as (1) translation of the psaAB mRNA, (2) assembly of the PsaA/PsaB polypeptides and their associated cofactors into a functional complex, or (3) degradation of the protein complex.</text>
</comment>
<comment type="similarity">
    <text evidence="1">Belongs to the BtpA family.</text>
</comment>
<dbReference type="EMBL" id="U37695">
    <property type="protein sequence ID" value="AAC45087.1"/>
    <property type="molecule type" value="Genomic_DNA"/>
</dbReference>
<dbReference type="EMBL" id="BA000022">
    <property type="protein sequence ID" value="BAA16984.1"/>
    <property type="molecule type" value="Genomic_DNA"/>
</dbReference>
<dbReference type="PIR" id="S74944">
    <property type="entry name" value="S74944"/>
</dbReference>
<dbReference type="STRING" id="1148.gene:10497844"/>
<dbReference type="PaxDb" id="1148-1652059"/>
<dbReference type="EnsemblBacteria" id="BAA16984">
    <property type="protein sequence ID" value="BAA16984"/>
    <property type="gene ID" value="BAA16984"/>
</dbReference>
<dbReference type="KEGG" id="syn:sll0634"/>
<dbReference type="eggNOG" id="COG0434">
    <property type="taxonomic scope" value="Bacteria"/>
</dbReference>
<dbReference type="InParanoid" id="P72966"/>
<dbReference type="PhylomeDB" id="P72966"/>
<dbReference type="Proteomes" id="UP000001425">
    <property type="component" value="Chromosome"/>
</dbReference>
<dbReference type="InterPro" id="IPR005137">
    <property type="entry name" value="BtpA"/>
</dbReference>
<dbReference type="InterPro" id="IPR011060">
    <property type="entry name" value="RibuloseP-bd_barrel"/>
</dbReference>
<dbReference type="NCBIfam" id="NF045918">
    <property type="entry name" value="PhsystIBiosynBtpA"/>
    <property type="match status" value="1"/>
</dbReference>
<dbReference type="NCBIfam" id="TIGR00259">
    <property type="entry name" value="thylakoid_BtpA"/>
    <property type="match status" value="1"/>
</dbReference>
<dbReference type="PANTHER" id="PTHR21381:SF3">
    <property type="entry name" value="SGC REGION PROTEIN SGCQ-RELATED"/>
    <property type="match status" value="1"/>
</dbReference>
<dbReference type="PANTHER" id="PTHR21381">
    <property type="entry name" value="ZGC:162297"/>
    <property type="match status" value="1"/>
</dbReference>
<dbReference type="Pfam" id="PF03437">
    <property type="entry name" value="BtpA"/>
    <property type="match status" value="1"/>
</dbReference>
<dbReference type="PIRSF" id="PIRSF005956">
    <property type="entry name" value="BtpA"/>
    <property type="match status" value="1"/>
</dbReference>
<dbReference type="SUPFAM" id="SSF51366">
    <property type="entry name" value="Ribulose-phoshate binding barrel"/>
    <property type="match status" value="1"/>
</dbReference>
<keyword id="KW-1185">Reference proteome</keyword>
<gene>
    <name type="primary">btpA</name>
    <name type="ordered locus">sll0634</name>
</gene>
<protein>
    <recommendedName>
        <fullName>Photosystem I biogenesis protein BtpA</fullName>
    </recommendedName>
</protein>
<proteinExistence type="inferred from homology"/>
<name>BTPA_SYNY3</name>
<accession>P72966</accession>
<accession>O08079</accession>
<feature type="chain" id="PRO_0000159328" description="Photosystem I biogenesis protein BtpA">
    <location>
        <begin position="1"/>
        <end position="287"/>
    </location>
</feature>
<feature type="sequence variant" description="In strain: BP26; photosynthesis-deficient.">
    <original>V</original>
    <variation>G</variation>
    <location>
        <position position="51"/>
    </location>
</feature>
<sequence length="287" mass="30042">MDLFQTFQTHNPVIGVVHLLPLPTSARWGGNLTAVIERAEQEATALAAGGVDGIIVENFFDAPFPKQRVDPAVVSAMTLIVDRLQNLVVAPVGINVLRNDAHSALAIASCVGAKFIRVNVLTGVMATDQGLIEGNAHELLRYRRELSSDVAILADVLVKHARPLGTPNLTTAVTDTIERGLADGIILSGWATGSPPNLEDLELATNAAKGTPVFIGSGADEDNIGQLIQAANGVIVASSLKRHGNINEAIDPIRVSAFIEAMAEGLKSKPSKSTVVDAPAGTKSVVC</sequence>
<evidence type="ECO:0000305" key="1"/>
<organism>
    <name type="scientific">Synechocystis sp. (strain ATCC 27184 / PCC 6803 / Kazusa)</name>
    <dbReference type="NCBI Taxonomy" id="1111708"/>
    <lineage>
        <taxon>Bacteria</taxon>
        <taxon>Bacillati</taxon>
        <taxon>Cyanobacteriota</taxon>
        <taxon>Cyanophyceae</taxon>
        <taxon>Synechococcales</taxon>
        <taxon>Merismopediaceae</taxon>
        <taxon>Synechocystis</taxon>
    </lineage>
</organism>